<dbReference type="EC" id="3.1.1.29" evidence="1"/>
<dbReference type="EMBL" id="CP000679">
    <property type="protein sequence ID" value="ABP66808.1"/>
    <property type="molecule type" value="Genomic_DNA"/>
</dbReference>
<dbReference type="RefSeq" id="WP_011916744.1">
    <property type="nucleotide sequence ID" value="NC_009437.1"/>
</dbReference>
<dbReference type="SMR" id="A4XIS3"/>
<dbReference type="STRING" id="351627.Csac_1205"/>
<dbReference type="KEGG" id="csc:Csac_1205"/>
<dbReference type="eggNOG" id="COG0193">
    <property type="taxonomic scope" value="Bacteria"/>
</dbReference>
<dbReference type="HOGENOM" id="CLU_062456_4_1_9"/>
<dbReference type="OrthoDB" id="9800507at2"/>
<dbReference type="Proteomes" id="UP000000256">
    <property type="component" value="Chromosome"/>
</dbReference>
<dbReference type="GO" id="GO:0005737">
    <property type="term" value="C:cytoplasm"/>
    <property type="evidence" value="ECO:0007669"/>
    <property type="project" value="UniProtKB-SubCell"/>
</dbReference>
<dbReference type="GO" id="GO:0004045">
    <property type="term" value="F:peptidyl-tRNA hydrolase activity"/>
    <property type="evidence" value="ECO:0007669"/>
    <property type="project" value="UniProtKB-UniRule"/>
</dbReference>
<dbReference type="GO" id="GO:0000049">
    <property type="term" value="F:tRNA binding"/>
    <property type="evidence" value="ECO:0007669"/>
    <property type="project" value="UniProtKB-UniRule"/>
</dbReference>
<dbReference type="GO" id="GO:0006515">
    <property type="term" value="P:protein quality control for misfolded or incompletely synthesized proteins"/>
    <property type="evidence" value="ECO:0007669"/>
    <property type="project" value="UniProtKB-UniRule"/>
</dbReference>
<dbReference type="GO" id="GO:0072344">
    <property type="term" value="P:rescue of stalled ribosome"/>
    <property type="evidence" value="ECO:0007669"/>
    <property type="project" value="UniProtKB-UniRule"/>
</dbReference>
<dbReference type="CDD" id="cd00462">
    <property type="entry name" value="PTH"/>
    <property type="match status" value="1"/>
</dbReference>
<dbReference type="FunFam" id="3.40.50.1470:FF:000001">
    <property type="entry name" value="Peptidyl-tRNA hydrolase"/>
    <property type="match status" value="1"/>
</dbReference>
<dbReference type="Gene3D" id="3.40.50.1470">
    <property type="entry name" value="Peptidyl-tRNA hydrolase"/>
    <property type="match status" value="1"/>
</dbReference>
<dbReference type="HAMAP" id="MF_00083">
    <property type="entry name" value="Pept_tRNA_hydro_bact"/>
    <property type="match status" value="1"/>
</dbReference>
<dbReference type="InterPro" id="IPR001328">
    <property type="entry name" value="Pept_tRNA_hydro"/>
</dbReference>
<dbReference type="InterPro" id="IPR018171">
    <property type="entry name" value="Pept_tRNA_hydro_CS"/>
</dbReference>
<dbReference type="InterPro" id="IPR036416">
    <property type="entry name" value="Pept_tRNA_hydro_sf"/>
</dbReference>
<dbReference type="NCBIfam" id="TIGR00447">
    <property type="entry name" value="pth"/>
    <property type="match status" value="1"/>
</dbReference>
<dbReference type="PANTHER" id="PTHR17224">
    <property type="entry name" value="PEPTIDYL-TRNA HYDROLASE"/>
    <property type="match status" value="1"/>
</dbReference>
<dbReference type="PANTHER" id="PTHR17224:SF1">
    <property type="entry name" value="PEPTIDYL-TRNA HYDROLASE"/>
    <property type="match status" value="1"/>
</dbReference>
<dbReference type="Pfam" id="PF01195">
    <property type="entry name" value="Pept_tRNA_hydro"/>
    <property type="match status" value="1"/>
</dbReference>
<dbReference type="SUPFAM" id="SSF53178">
    <property type="entry name" value="Peptidyl-tRNA hydrolase-like"/>
    <property type="match status" value="1"/>
</dbReference>
<dbReference type="PROSITE" id="PS01195">
    <property type="entry name" value="PEPT_TRNA_HYDROL_1"/>
    <property type="match status" value="1"/>
</dbReference>
<dbReference type="PROSITE" id="PS01196">
    <property type="entry name" value="PEPT_TRNA_HYDROL_2"/>
    <property type="match status" value="1"/>
</dbReference>
<protein>
    <recommendedName>
        <fullName evidence="1">Peptidyl-tRNA hydrolase</fullName>
        <shortName evidence="1">Pth</shortName>
        <ecNumber evidence="1">3.1.1.29</ecNumber>
    </recommendedName>
</protein>
<evidence type="ECO:0000255" key="1">
    <source>
        <dbReference type="HAMAP-Rule" id="MF_00083"/>
    </source>
</evidence>
<feature type="chain" id="PRO_1000057548" description="Peptidyl-tRNA hydrolase">
    <location>
        <begin position="1"/>
        <end position="189"/>
    </location>
</feature>
<feature type="active site" description="Proton acceptor" evidence="1">
    <location>
        <position position="20"/>
    </location>
</feature>
<feature type="binding site" evidence="1">
    <location>
        <position position="15"/>
    </location>
    <ligand>
        <name>tRNA</name>
        <dbReference type="ChEBI" id="CHEBI:17843"/>
    </ligand>
</feature>
<feature type="binding site" evidence="1">
    <location>
        <position position="65"/>
    </location>
    <ligand>
        <name>tRNA</name>
        <dbReference type="ChEBI" id="CHEBI:17843"/>
    </ligand>
</feature>
<feature type="binding site" evidence="1">
    <location>
        <position position="67"/>
    </location>
    <ligand>
        <name>tRNA</name>
        <dbReference type="ChEBI" id="CHEBI:17843"/>
    </ligand>
</feature>
<feature type="binding site" evidence="1">
    <location>
        <position position="113"/>
    </location>
    <ligand>
        <name>tRNA</name>
        <dbReference type="ChEBI" id="CHEBI:17843"/>
    </ligand>
</feature>
<feature type="site" description="Discriminates between blocked and unblocked aminoacyl-tRNA" evidence="1">
    <location>
        <position position="10"/>
    </location>
</feature>
<feature type="site" description="Stabilizes the basic form of H active site to accept a proton" evidence="1">
    <location>
        <position position="92"/>
    </location>
</feature>
<sequence length="189" mass="21230">MDYIIAGLGNPGERYTFTRHNAGFLAIDYLAQAFNTKVDKIKFKGLTGSFEYADKKVLLLKPMTYMNSSGDSIVEAVNFYKVKPEKLIVIYDDIAFDVGVVKMRKKGSDGGHNGVKSIIQRLGTEEFPRIRIGIGVPKEDMVKYVLSEFEDYEKQKIFRAIEKAAQGIKILLESGIDRAMNYINGDVVV</sequence>
<proteinExistence type="inferred from homology"/>
<name>PTH_CALS8</name>
<comment type="function">
    <text evidence="1">Hydrolyzes ribosome-free peptidyl-tRNAs (with 1 or more amino acids incorporated), which drop off the ribosome during protein synthesis, or as a result of ribosome stalling.</text>
</comment>
<comment type="function">
    <text evidence="1">Catalyzes the release of premature peptidyl moieties from peptidyl-tRNA molecules trapped in stalled 50S ribosomal subunits, and thus maintains levels of free tRNAs and 50S ribosomes.</text>
</comment>
<comment type="catalytic activity">
    <reaction evidence="1">
        <text>an N-acyl-L-alpha-aminoacyl-tRNA + H2O = an N-acyl-L-amino acid + a tRNA + H(+)</text>
        <dbReference type="Rhea" id="RHEA:54448"/>
        <dbReference type="Rhea" id="RHEA-COMP:10123"/>
        <dbReference type="Rhea" id="RHEA-COMP:13883"/>
        <dbReference type="ChEBI" id="CHEBI:15377"/>
        <dbReference type="ChEBI" id="CHEBI:15378"/>
        <dbReference type="ChEBI" id="CHEBI:59874"/>
        <dbReference type="ChEBI" id="CHEBI:78442"/>
        <dbReference type="ChEBI" id="CHEBI:138191"/>
        <dbReference type="EC" id="3.1.1.29"/>
    </reaction>
</comment>
<comment type="subunit">
    <text evidence="1">Monomer.</text>
</comment>
<comment type="subcellular location">
    <subcellularLocation>
        <location evidence="1">Cytoplasm</location>
    </subcellularLocation>
</comment>
<comment type="similarity">
    <text evidence="1">Belongs to the PTH family.</text>
</comment>
<organism>
    <name type="scientific">Caldicellulosiruptor saccharolyticus (strain ATCC 43494 / DSM 8903 / Tp8T 6331)</name>
    <dbReference type="NCBI Taxonomy" id="351627"/>
    <lineage>
        <taxon>Bacteria</taxon>
        <taxon>Bacillati</taxon>
        <taxon>Bacillota</taxon>
        <taxon>Bacillota incertae sedis</taxon>
        <taxon>Caldicellulosiruptorales</taxon>
        <taxon>Caldicellulosiruptoraceae</taxon>
        <taxon>Caldicellulosiruptor</taxon>
    </lineage>
</organism>
<reference key="1">
    <citation type="submission" date="2007-04" db="EMBL/GenBank/DDBJ databases">
        <title>Genome sequence of the thermophilic hydrogen-producing bacterium Caldicellulosiruptor saccharolyticus DSM 8903.</title>
        <authorList>
            <person name="Copeland A."/>
            <person name="Lucas S."/>
            <person name="Lapidus A."/>
            <person name="Barry K."/>
            <person name="Detter J.C."/>
            <person name="Glavina del Rio T."/>
            <person name="Hammon N."/>
            <person name="Israni S."/>
            <person name="Dalin E."/>
            <person name="Tice H."/>
            <person name="Pitluck S."/>
            <person name="Kiss H."/>
            <person name="Brettin T."/>
            <person name="Bruce D."/>
            <person name="Han C."/>
            <person name="Schmutz J."/>
            <person name="Larimer F."/>
            <person name="Land M."/>
            <person name="Hauser L."/>
            <person name="Kyrpides N."/>
            <person name="Lykidis A."/>
            <person name="van de Werken H.J.G."/>
            <person name="Verhaart M.R.A."/>
            <person name="VanFossen A.L."/>
            <person name="Lewis D.L."/>
            <person name="Nichols J.D."/>
            <person name="Goorissen H.P."/>
            <person name="van Niel E.W.J."/>
            <person name="Stams F.J.M."/>
            <person name="Willquist K.U."/>
            <person name="Ward D.E."/>
            <person name="van der Oost J."/>
            <person name="Kelly R.M."/>
            <person name="Kengen S.M.W."/>
            <person name="Richardson P."/>
        </authorList>
    </citation>
    <scope>NUCLEOTIDE SEQUENCE [LARGE SCALE GENOMIC DNA]</scope>
    <source>
        <strain>ATCC 43494 / DSM 8903 / Tp8T 6331</strain>
    </source>
</reference>
<gene>
    <name evidence="1" type="primary">pth</name>
    <name type="ordered locus">Csac_1205</name>
</gene>
<accession>A4XIS3</accession>
<keyword id="KW-0963">Cytoplasm</keyword>
<keyword id="KW-0378">Hydrolase</keyword>
<keyword id="KW-0694">RNA-binding</keyword>
<keyword id="KW-0820">tRNA-binding</keyword>